<name>ECCC5_MYCTO</name>
<evidence type="ECO:0000250" key="1">
    <source>
        <dbReference type="UniProtKB" id="B2HST4"/>
    </source>
</evidence>
<evidence type="ECO:0000250" key="2">
    <source>
        <dbReference type="UniProtKB" id="P9WNA5"/>
    </source>
</evidence>
<evidence type="ECO:0000255" key="3"/>
<evidence type="ECO:0000255" key="4">
    <source>
        <dbReference type="PROSITE-ProRule" id="PRU00289"/>
    </source>
</evidence>
<gene>
    <name evidence="2" type="primary">eccC5</name>
    <name type="ordered locus">MT1833</name>
</gene>
<sequence length="1391" mass="152740">MKRGFARPTPEKPPVIKPENIVLSTPLSIPPPEGKPWWLIVVGVVVVGLLGGMVAMVFASGSHVFGGIGSIFPLFMMVGIMMMMFRGMGGGQQQMSRPKLDAMRAQFMLMLDMLRETAQESADSMDANYRWFHPAPNTLAAAVGSPRMWERKPDGKDLNFGVVRVGVGMTRPEVTWGEPQNMPTDIELEPVTGKALQEFGRYQSVVYNLPKMVSLLVEPWYALVGEREQVLGLMRAIICQLAFSHGPDHVQMIVVSSDLDQWDWVKWLPHFGDSRRHDAAGNARMVYTSVREFAAEQAELFAGRGSFTPRHASSSAQTPTPHTVIIADVDDPQWEYVISAEGVDGVTFFDLTGSSMWTDIPERKLQFDKTGVIEALPRDRDTWMVIDDKAWFFALTDQVSIAEAEEFAQKLAQWRLAEAYEEIGQRVAHIGARDILSYYGIDDPGNIDFDSLWASRTDTMGRSRLRAPFGNRSDNGELLFLDMKSLDEGGDGPHGVMSGTTGSGKSTLVRTVIESLMLSHPPEELQFVLADLKGGSAVKPFAGVPHVSRIITDLEEDQALMERFLDALWGEIARRKAICDSAGVDDAKEYNSVRARMRARGQDMAPLPMLVVVIDEFYEWFRIMPTAVDVLDSIGRQGRAYWIHLMMASQTIESRAEKLMENMGYRLVLKARTAGAAQAAGVPNAVNLPAQAGLGYFRKSLEDIIRFQAEFLWRDYFQPGVSIDGEEAPALVHSIDYIRPQLFTNSFTPLEVSVGGPDIEPVVAQPNGEVLESDDIEGGEDEDEEGVRTPKVGTVIIDQLRKIKFEPYRLWQPPLTQPVAIDDLVNRFLGRPWHKEYGSACNLVFPIGIIDRPYKHDQPPWTVDTSGPGANVLILGAGGSGKTTALQTLICSAALTHTPQQVQFYCLAYSSTALTTVSRIPHVGEVAGPTDPYGVRRTVAELLALVRERKRSFLECGIASMEMFRRRKFGGEAGPVPDDGFGDVYLVIDNYRALAEENEVLIEQVNVIINQGPSFGVHVVVTADRESELRPPVRSGFGSRIELRLAAVEDAKLVRSRFAKDVPVKPGRGMVAVNYVRLDSDPQAGLHTLVARPALGSTPDNVFECDSVVAAVSRLTSAQAPPVRRLPARFGVEQVRELASRDTRQGVGAGGIAWAISELDLAPVYLNFAENSHLMVTGRRECGRTTTLATIMSEIGRLYAPGASSAPPPAPGRPSAQVWLVDPRRQLLTALGSDYVERFAYNLDGVVAMMGELAAALAGREPPPGLSAEELLSRSWWSGPEIFLIVDDIQQLPPGFDSPLHKAVPFVNRAADVGLHVIVTRTFGGWSSAGSDPMLRALHQANAPLLVMDADPDEGFIRGKMKGGPLPRGRGLLMAEDTGVFVQVAATEVRR</sequence>
<feature type="chain" id="PRO_0000427161" description="ESX-5 secretion system protein EccC5">
    <location>
        <begin position="1"/>
        <end position="1391"/>
    </location>
</feature>
<feature type="transmembrane region" description="Helical" evidence="3">
    <location>
        <begin position="38"/>
        <end position="58"/>
    </location>
</feature>
<feature type="transmembrane region" description="Helical" evidence="3">
    <location>
        <begin position="65"/>
        <end position="85"/>
    </location>
</feature>
<feature type="domain" description="FtsK 1" evidence="4">
    <location>
        <begin position="476"/>
        <end position="678"/>
    </location>
</feature>
<feature type="domain" description="FtsK 2" evidence="4">
    <location>
        <begin position="858"/>
        <end position="1052"/>
    </location>
</feature>
<feature type="domain" description="FtsK 3" evidence="4">
    <location>
        <begin position="1161"/>
        <end position="1354"/>
    </location>
</feature>
<feature type="binding site" evidence="4">
    <location>
        <begin position="499"/>
        <end position="506"/>
    </location>
    <ligand>
        <name>ATP</name>
        <dbReference type="ChEBI" id="CHEBI:30616"/>
    </ligand>
</feature>
<feature type="binding site" evidence="4">
    <location>
        <begin position="876"/>
        <end position="883"/>
    </location>
    <ligand>
        <name>ATP</name>
        <dbReference type="ChEBI" id="CHEBI:30616"/>
    </ligand>
</feature>
<feature type="binding site" evidence="4">
    <location>
        <begin position="1178"/>
        <end position="1185"/>
    </location>
    <ligand>
        <name>ATP</name>
        <dbReference type="ChEBI" id="CHEBI:30616"/>
    </ligand>
</feature>
<organism>
    <name type="scientific">Mycobacterium tuberculosis (strain CDC 1551 / Oshkosh)</name>
    <dbReference type="NCBI Taxonomy" id="83331"/>
    <lineage>
        <taxon>Bacteria</taxon>
        <taxon>Bacillati</taxon>
        <taxon>Actinomycetota</taxon>
        <taxon>Actinomycetes</taxon>
        <taxon>Mycobacteriales</taxon>
        <taxon>Mycobacteriaceae</taxon>
        <taxon>Mycobacterium</taxon>
        <taxon>Mycobacterium tuberculosis complex</taxon>
    </lineage>
</organism>
<reference key="1">
    <citation type="journal article" date="2002" name="J. Bacteriol.">
        <title>Whole-genome comparison of Mycobacterium tuberculosis clinical and laboratory strains.</title>
        <authorList>
            <person name="Fleischmann R.D."/>
            <person name="Alland D."/>
            <person name="Eisen J.A."/>
            <person name="Carpenter L."/>
            <person name="White O."/>
            <person name="Peterson J.D."/>
            <person name="DeBoy R.T."/>
            <person name="Dodson R.J."/>
            <person name="Gwinn M.L."/>
            <person name="Haft D.H."/>
            <person name="Hickey E.K."/>
            <person name="Kolonay J.F."/>
            <person name="Nelson W.C."/>
            <person name="Umayam L.A."/>
            <person name="Ermolaeva M.D."/>
            <person name="Salzberg S.L."/>
            <person name="Delcher A."/>
            <person name="Utterback T.R."/>
            <person name="Weidman J.F."/>
            <person name="Khouri H.M."/>
            <person name="Gill J."/>
            <person name="Mikula A."/>
            <person name="Bishai W."/>
            <person name="Jacobs W.R. Jr."/>
            <person name="Venter J.C."/>
            <person name="Fraser C.M."/>
        </authorList>
    </citation>
    <scope>NUCLEOTIDE SEQUENCE [LARGE SCALE GENOMIC DNA]</scope>
    <source>
        <strain>CDC 1551 / Oshkosh</strain>
    </source>
</reference>
<dbReference type="EMBL" id="AE000516">
    <property type="protein sequence ID" value="AAK46103.1"/>
    <property type="molecule type" value="Genomic_DNA"/>
</dbReference>
<dbReference type="PIR" id="A70929">
    <property type="entry name" value="A70929"/>
</dbReference>
<dbReference type="PIR" id="B70929">
    <property type="entry name" value="B70929"/>
</dbReference>
<dbReference type="RefSeq" id="WP_003408799.1">
    <property type="nucleotide sequence ID" value="NZ_KK341227.1"/>
</dbReference>
<dbReference type="SMR" id="P9WNA4"/>
<dbReference type="KEGG" id="mtc:MT1833"/>
<dbReference type="PATRIC" id="fig|83331.31.peg.1974"/>
<dbReference type="HOGENOM" id="CLU_003134_1_0_11"/>
<dbReference type="Proteomes" id="UP000001020">
    <property type="component" value="Chromosome"/>
</dbReference>
<dbReference type="GO" id="GO:0005886">
    <property type="term" value="C:plasma membrane"/>
    <property type="evidence" value="ECO:0007669"/>
    <property type="project" value="UniProtKB-SubCell"/>
</dbReference>
<dbReference type="GO" id="GO:0005524">
    <property type="term" value="F:ATP binding"/>
    <property type="evidence" value="ECO:0007669"/>
    <property type="project" value="UniProtKB-KW"/>
</dbReference>
<dbReference type="GO" id="GO:0016887">
    <property type="term" value="F:ATP hydrolysis activity"/>
    <property type="evidence" value="ECO:0007669"/>
    <property type="project" value="InterPro"/>
</dbReference>
<dbReference type="GO" id="GO:0003677">
    <property type="term" value="F:DNA binding"/>
    <property type="evidence" value="ECO:0007669"/>
    <property type="project" value="InterPro"/>
</dbReference>
<dbReference type="FunFam" id="3.40.50.300:FF:002667">
    <property type="entry name" value="ESX-5 secretion system protein EccC5"/>
    <property type="match status" value="1"/>
</dbReference>
<dbReference type="FunFam" id="3.40.50.300:FF:001298">
    <property type="entry name" value="Type VII secretion protein EccC"/>
    <property type="match status" value="1"/>
</dbReference>
<dbReference type="FunFam" id="3.40.50.300:FF:001338">
    <property type="entry name" value="Type VII secretion protein EccC"/>
    <property type="match status" value="1"/>
</dbReference>
<dbReference type="FunFam" id="3.40.50.300:FF:002200">
    <property type="entry name" value="Type VII secretion protein EccC"/>
    <property type="match status" value="1"/>
</dbReference>
<dbReference type="Gene3D" id="3.40.50.300">
    <property type="entry name" value="P-loop containing nucleotide triphosphate hydrolases"/>
    <property type="match status" value="4"/>
</dbReference>
<dbReference type="InterPro" id="IPR003593">
    <property type="entry name" value="AAA+_ATPase"/>
</dbReference>
<dbReference type="InterPro" id="IPR023836">
    <property type="entry name" value="EccCa-like_Actinobacteria"/>
</dbReference>
<dbReference type="InterPro" id="IPR023837">
    <property type="entry name" value="EccCb-like_Actinobacteria"/>
</dbReference>
<dbReference type="InterPro" id="IPR050206">
    <property type="entry name" value="FtsK/SpoIIIE/SftA"/>
</dbReference>
<dbReference type="InterPro" id="IPR002543">
    <property type="entry name" value="FtsK_dom"/>
</dbReference>
<dbReference type="InterPro" id="IPR027417">
    <property type="entry name" value="P-loop_NTPase"/>
</dbReference>
<dbReference type="NCBIfam" id="TIGR03924">
    <property type="entry name" value="T7SS_EccC_a"/>
    <property type="match status" value="1"/>
</dbReference>
<dbReference type="NCBIfam" id="TIGR03925">
    <property type="entry name" value="T7SS_EccC_b"/>
    <property type="match status" value="1"/>
</dbReference>
<dbReference type="PANTHER" id="PTHR22683">
    <property type="entry name" value="SPORULATION PROTEIN RELATED"/>
    <property type="match status" value="1"/>
</dbReference>
<dbReference type="PANTHER" id="PTHR22683:SF1">
    <property type="entry name" value="TYPE VII SECRETION SYSTEM PROTEIN ESSC"/>
    <property type="match status" value="1"/>
</dbReference>
<dbReference type="Pfam" id="PF01580">
    <property type="entry name" value="FtsK_SpoIIIE"/>
    <property type="match status" value="2"/>
</dbReference>
<dbReference type="SMART" id="SM00382">
    <property type="entry name" value="AAA"/>
    <property type="match status" value="3"/>
</dbReference>
<dbReference type="SUPFAM" id="SSF52540">
    <property type="entry name" value="P-loop containing nucleoside triphosphate hydrolases"/>
    <property type="match status" value="2"/>
</dbReference>
<dbReference type="PROSITE" id="PS50901">
    <property type="entry name" value="FTSK"/>
    <property type="match status" value="3"/>
</dbReference>
<accession>P9WNA4</accession>
<accession>L0T992</accession>
<accession>O53934</accession>
<accession>O53935</accession>
<accession>Q8VJW6</accession>
<protein>
    <recommendedName>
        <fullName evidence="2">ESX-5 secretion system protein EccC5</fullName>
    </recommendedName>
    <alternativeName>
        <fullName evidence="2">ESX conserved component C5</fullName>
    </alternativeName>
    <alternativeName>
        <fullName evidence="2">Type VII secretion system protein EccC5</fullName>
        <shortName evidence="2">T7SS protein EccC5</shortName>
    </alternativeName>
</protein>
<comment type="function">
    <text evidence="2">Part of the ESX-5 specialized secretion system, which is responsible for the secretion of EsxN and a number of PE_PGRS and PPE proteins, including PPE41.</text>
</comment>
<comment type="subunit">
    <text evidence="1">Part of the ESX-5 / type VII secretion system (T7SS), which is composed of cytosolic and membrane components. The ESX-5 membrane complex is composed of EccB5, EccC5, EccD5 and EccE5.</text>
</comment>
<comment type="subcellular location">
    <subcellularLocation>
        <location evidence="1">Cell inner membrane</location>
        <topology evidence="3">Multi-pass membrane protein</topology>
    </subcellularLocation>
</comment>
<proteinExistence type="inferred from homology"/>
<keyword id="KW-0067">ATP-binding</keyword>
<keyword id="KW-0997">Cell inner membrane</keyword>
<keyword id="KW-1003">Cell membrane</keyword>
<keyword id="KW-0472">Membrane</keyword>
<keyword id="KW-0547">Nucleotide-binding</keyword>
<keyword id="KW-1185">Reference proteome</keyword>
<keyword id="KW-0677">Repeat</keyword>
<keyword id="KW-0812">Transmembrane</keyword>
<keyword id="KW-1133">Transmembrane helix</keyword>
<keyword id="KW-0813">Transport</keyword>